<proteinExistence type="evidence at protein level"/>
<sequence>MAETLFWTPLLVVLLAGLGDTEAQQTTLHPLVGRVFVHTLDHETFLSLPEHVAVPPAVHITYHAHLQGHPDLPRWLRYTQRSPHHPGFLYGSATPEDRGLQVIEVTAYNRDSFDTTRQRLVLEIGDPEGPLLPYQAEFLVRSHDAEEVLPSTPASRFLSALGGLWEPGELQLLNVTSALDRGGRVPLPIEGRKEGVYIKVGSASPFSTCLKMVASPDSHARCAQGQPPLLSCYDTLAPHFRVDWCNVTLVDKSVPEPADEVPTPGDGILEHDPFFCPPTEAPDRDFLVDALVTLLVPLLVALLLTLLLAYVMCCRREGRLKRDLATSDIQMVHHCTIHGNTEELRQMAASREVPRPLSTLPMFNVHTGERLPPRVDSAQVPLILDQH</sequence>
<name>SGCA_HUMAN</name>
<gene>
    <name type="primary">SGCA</name>
    <name type="synonym">ADL</name>
    <name type="synonym">DAG2</name>
</gene>
<feature type="signal peptide" evidence="3">
    <location>
        <begin position="1"/>
        <end position="23"/>
    </location>
</feature>
<feature type="chain" id="PRO_0000031673" description="Alpha-sarcoglycan">
    <location>
        <begin position="24"/>
        <end position="387"/>
    </location>
</feature>
<feature type="topological domain" description="Extracellular" evidence="3">
    <location>
        <begin position="24"/>
        <end position="290"/>
    </location>
</feature>
<feature type="transmembrane region" description="Helical" evidence="3">
    <location>
        <begin position="291"/>
        <end position="311"/>
    </location>
</feature>
<feature type="topological domain" description="Cytoplasmic" evidence="3">
    <location>
        <begin position="312"/>
        <end position="387"/>
    </location>
</feature>
<feature type="modified residue" description="Phosphoserine" evidence="2">
    <location>
        <position position="377"/>
    </location>
</feature>
<feature type="glycosylation site" description="N-linked (GlcNAc...) asparagine" evidence="3">
    <location>
        <position position="174"/>
    </location>
</feature>
<feature type="glycosylation site" description="N-linked (GlcNAc...) asparagine" evidence="3">
    <location>
        <position position="246"/>
    </location>
</feature>
<feature type="splice variant" id="VSP_006017" description="In isoform SGCA-2." evidence="13">
    <location>
        <begin position="196"/>
        <end position="319"/>
    </location>
</feature>
<feature type="sequence variant" id="VAR_010402" description="In LGMDR3; dbSNP:rs886043256." evidence="11">
    <original>P</original>
    <variation>L</variation>
    <location>
        <position position="30"/>
    </location>
</feature>
<feature type="sequence variant" id="VAR_010403" description="In LGMDR3; dbSNP:rs903823830." evidence="10">
    <original>L</original>
    <variation>P</variation>
    <location>
        <position position="31"/>
    </location>
</feature>
<feature type="sequence variant" id="VAR_010404" description="In LGMDR3; dbSNP:rs758647756." evidence="11">
    <original>R</original>
    <variation>C</variation>
    <location>
        <position position="34"/>
    </location>
</feature>
<feature type="sequence variant" id="VAR_010405" description="In LGMDR3; dbSNP:rs371675217." evidence="7">
    <original>R</original>
    <variation>H</variation>
    <location>
        <position position="34"/>
    </location>
</feature>
<feature type="sequence variant" id="VAR_010406" description="In LGMDR3; dbSNP:rs2144494074." evidence="7">
    <original>Y</original>
    <variation>H</variation>
    <location>
        <position position="62"/>
    </location>
</feature>
<feature type="sequence variant" id="VAR_010407" description="In LGMDR3; dbSNP:rs2144494148." evidence="7">
    <original>G</original>
    <variation>E</variation>
    <location>
        <position position="68"/>
    </location>
</feature>
<feature type="sequence variant" id="VAR_010408" description="In LGMDR3; dbSNP:rs757888349." evidence="5">
    <original>R</original>
    <variation>W</variation>
    <location>
        <position position="74"/>
    </location>
</feature>
<feature type="sequence variant" id="VAR_081098" description="In LGMDR3; dbSNP:rs1555568335." evidence="5">
    <original>L</original>
    <variation>F</variation>
    <location>
        <position position="76"/>
    </location>
</feature>
<feature type="sequence variant" id="VAR_010387" description="In LGMDR3; dbSNP:rs28933693." evidence="6 7 9 10 11">
    <original>R</original>
    <variation>C</variation>
    <location>
        <position position="77"/>
    </location>
</feature>
<feature type="sequence variant" id="VAR_081099" description="In LGMDR3; dbSNP:rs398123098." evidence="5">
    <original>R</original>
    <variation>C</variation>
    <location>
        <position position="81"/>
    </location>
</feature>
<feature type="sequence variant" id="VAR_010409" description="In LGMDR3; dbSNP:rs1435014211." evidence="4">
    <original>L</original>
    <variation>P</variation>
    <location>
        <position position="89"/>
    </location>
</feature>
<feature type="sequence variant" id="VAR_010410" description="In LGMDR3." evidence="11">
    <original>G</original>
    <variation>R</variation>
    <location>
        <position position="91"/>
    </location>
</feature>
<feature type="sequence variant" id="VAR_010411" description="In LGMDR3." evidence="10">
    <original>A</original>
    <variation>V</variation>
    <location>
        <position position="93"/>
    </location>
</feature>
<feature type="sequence variant" id="VAR_010412" description="In LGMDR3; dbSNP:rs1555568396." evidence="10">
    <original>D</original>
    <variation>G</variation>
    <location>
        <position position="97"/>
    </location>
</feature>
<feature type="sequence variant" id="VAR_010413" description="In LGMDR3; dbSNP:rs138945081.">
    <original>R</original>
    <variation>C</variation>
    <location>
        <position position="98"/>
    </location>
</feature>
<feature type="sequence variant" id="VAR_010388" description="In LGMDR3; dbSNP:rs137852621." evidence="7 8">
    <original>R</original>
    <variation>H</variation>
    <location>
        <position position="98"/>
    </location>
</feature>
<feature type="sequence variant" id="VAR_010414" description="In LGMDR3; dbSNP:rs1161291343.">
    <original>I</original>
    <variation>T</variation>
    <location>
        <position position="103"/>
    </location>
</feature>
<feature type="sequence variant" id="VAR_010415" description="In LGMDR3; dbSNP:rs768814872." evidence="10 11">
    <original>I</original>
    <variation>T</variation>
    <location>
        <position position="124"/>
    </location>
</feature>
<feature type="sequence variant" id="VAR_037965" description="In LGMDR3; associated with G-137." evidence="6">
    <original>A</original>
    <variation>APGAQP</variation>
    <location>
        <position position="136"/>
    </location>
</feature>
<feature type="sequence variant" id="VAR_037966" description="In LGMDR3; associated with P-G-A-Q-P-136 ins; dbSNP:rs397514451." evidence="6">
    <original>E</original>
    <variation>G</variation>
    <location>
        <position position="137"/>
    </location>
</feature>
<feature type="sequence variant" id="VAR_010416" description="In LGMDR3; dbSNP:rs372210292." evidence="11">
    <original>E</original>
    <variation>K</variation>
    <location>
        <position position="137"/>
    </location>
</feature>
<feature type="sequence variant" id="VAR_010417" description="In LGMDR3; dbSNP:rs2144496721." evidence="10">
    <original>L</original>
    <variation>F</variation>
    <location>
        <position position="158"/>
    </location>
</feature>
<feature type="sequence variant" id="VAR_010431" description="In LGMDR3; dbSNP:rs143962150." evidence="10 11">
    <original>L</original>
    <variation>P</variation>
    <location>
        <position position="173"/>
    </location>
</feature>
<feature type="sequence variant" id="VAR_010389" description="In LGMDR3; dbSNP:rs137852622." evidence="8">
    <original>V</original>
    <variation>A</variation>
    <location>
        <position position="175"/>
    </location>
</feature>
<feature type="sequence variant" id="VAR_010418" description="In LGMDR3; dbSNP:rs752695991." evidence="10">
    <original>V</original>
    <variation>I</variation>
    <location>
        <position position="196"/>
    </location>
</feature>
<feature type="sequence variant" id="VAR_010419" description="In LGMDR3; dbSNP:rs757481230." evidence="10">
    <original>P</original>
    <variation>H</variation>
    <location>
        <position position="205"/>
    </location>
</feature>
<feature type="sequence variant" id="VAR_010432" description="In LGMDR3." evidence="10">
    <original>P</original>
    <variation>Q</variation>
    <location>
        <position position="228"/>
    </location>
</feature>
<feature type="sequence variant" id="VAR_010420" description="In LGMDR3; dbSNP:rs1384158714." evidence="7">
    <original>V</original>
    <variation>A</variation>
    <location>
        <position position="242"/>
    </location>
</feature>
<feature type="sequence variant" id="VAR_010433" description="In LGMDR3; dbSNP:rs143570936." evidence="7">
    <original>V</original>
    <variation>M</variation>
    <location>
        <position position="247"/>
    </location>
</feature>
<feature type="sequence variant" id="VAR_010390" description="In LGMDR3; dbSNP:rs137852623." evidence="11 12">
    <original>R</original>
    <variation>C</variation>
    <location>
        <position position="284"/>
    </location>
</feature>
<reference key="1">
    <citation type="journal article" date="1994" name="Cell">
        <title>Missense mutations in the adhalin gene linked to autosomal recessive muscular dystrophy.</title>
        <authorList>
            <person name="Roberds S.L."/>
            <person name="Leturcq F."/>
            <person name="Allamand V."/>
            <person name="Piccolo F."/>
            <person name="Jeanpierre M."/>
            <person name="Anderson R.D."/>
            <person name="Lim L.E."/>
            <person name="Lee J.C."/>
            <person name="Tome F.M.S."/>
            <person name="Romero N.B."/>
            <person name="Fardeau M."/>
            <person name="Beckmann J.S."/>
            <person name="Kaplan J.-C."/>
            <person name="Campbell K.P."/>
        </authorList>
    </citation>
    <scope>NUCLEOTIDE SEQUENCE [MRNA]</scope>
    <scope>VARIANTS LGMDR3 HIS-98 AND ALA-175</scope>
    <source>
        <tissue>Skeletal muscle</tissue>
    </source>
</reference>
<reference key="2">
    <citation type="journal article" date="1994" name="Proc. Natl. Acad. Sci. U.S.A.">
        <title>Human adhalin is alternatively spliced and the gene is on chromosome 17q21.</title>
        <authorList>
            <person name="McNally E."/>
            <person name="Yoshida M."/>
            <person name="Mizuno Y."/>
            <person name="Ozawa E."/>
            <person name="Kunkel L.M."/>
        </authorList>
    </citation>
    <scope>NUCLEOTIDE SEQUENCE [MRNA]</scope>
    <scope>ALTERNATIVE SPLICING</scope>
    <source>
        <tissue>Heart ventricle</tissue>
    </source>
</reference>
<reference key="3">
    <citation type="journal article" date="2004" name="Nat. Genet.">
        <title>Complete sequencing and characterization of 21,243 full-length human cDNAs.</title>
        <authorList>
            <person name="Ota T."/>
            <person name="Suzuki Y."/>
            <person name="Nishikawa T."/>
            <person name="Otsuki T."/>
            <person name="Sugiyama T."/>
            <person name="Irie R."/>
            <person name="Wakamatsu A."/>
            <person name="Hayashi K."/>
            <person name="Sato H."/>
            <person name="Nagai K."/>
            <person name="Kimura K."/>
            <person name="Makita H."/>
            <person name="Sekine M."/>
            <person name="Obayashi M."/>
            <person name="Nishi T."/>
            <person name="Shibahara T."/>
            <person name="Tanaka T."/>
            <person name="Ishii S."/>
            <person name="Yamamoto J."/>
            <person name="Saito K."/>
            <person name="Kawai Y."/>
            <person name="Isono Y."/>
            <person name="Nakamura Y."/>
            <person name="Nagahari K."/>
            <person name="Murakami K."/>
            <person name="Yasuda T."/>
            <person name="Iwayanagi T."/>
            <person name="Wagatsuma M."/>
            <person name="Shiratori A."/>
            <person name="Sudo H."/>
            <person name="Hosoiri T."/>
            <person name="Kaku Y."/>
            <person name="Kodaira H."/>
            <person name="Kondo H."/>
            <person name="Sugawara M."/>
            <person name="Takahashi M."/>
            <person name="Kanda K."/>
            <person name="Yokoi T."/>
            <person name="Furuya T."/>
            <person name="Kikkawa E."/>
            <person name="Omura Y."/>
            <person name="Abe K."/>
            <person name="Kamihara K."/>
            <person name="Katsuta N."/>
            <person name="Sato K."/>
            <person name="Tanikawa M."/>
            <person name="Yamazaki M."/>
            <person name="Ninomiya K."/>
            <person name="Ishibashi T."/>
            <person name="Yamashita H."/>
            <person name="Murakawa K."/>
            <person name="Fujimori K."/>
            <person name="Tanai H."/>
            <person name="Kimata M."/>
            <person name="Watanabe M."/>
            <person name="Hiraoka S."/>
            <person name="Chiba Y."/>
            <person name="Ishida S."/>
            <person name="Ono Y."/>
            <person name="Takiguchi S."/>
            <person name="Watanabe S."/>
            <person name="Yosida M."/>
            <person name="Hotuta T."/>
            <person name="Kusano J."/>
            <person name="Kanehori K."/>
            <person name="Takahashi-Fujii A."/>
            <person name="Hara H."/>
            <person name="Tanase T.-O."/>
            <person name="Nomura Y."/>
            <person name="Togiya S."/>
            <person name="Komai F."/>
            <person name="Hara R."/>
            <person name="Takeuchi K."/>
            <person name="Arita M."/>
            <person name="Imose N."/>
            <person name="Musashino K."/>
            <person name="Yuuki H."/>
            <person name="Oshima A."/>
            <person name="Sasaki N."/>
            <person name="Aotsuka S."/>
            <person name="Yoshikawa Y."/>
            <person name="Matsunawa H."/>
            <person name="Ichihara T."/>
            <person name="Shiohata N."/>
            <person name="Sano S."/>
            <person name="Moriya S."/>
            <person name="Momiyama H."/>
            <person name="Satoh N."/>
            <person name="Takami S."/>
            <person name="Terashima Y."/>
            <person name="Suzuki O."/>
            <person name="Nakagawa S."/>
            <person name="Senoh A."/>
            <person name="Mizoguchi H."/>
            <person name="Goto Y."/>
            <person name="Shimizu F."/>
            <person name="Wakebe H."/>
            <person name="Hishigaki H."/>
            <person name="Watanabe T."/>
            <person name="Sugiyama A."/>
            <person name="Takemoto M."/>
            <person name="Kawakami B."/>
            <person name="Yamazaki M."/>
            <person name="Watanabe K."/>
            <person name="Kumagai A."/>
            <person name="Itakura S."/>
            <person name="Fukuzumi Y."/>
            <person name="Fujimori Y."/>
            <person name="Komiyama M."/>
            <person name="Tashiro H."/>
            <person name="Tanigami A."/>
            <person name="Fujiwara T."/>
            <person name="Ono T."/>
            <person name="Yamada K."/>
            <person name="Fujii Y."/>
            <person name="Ozaki K."/>
            <person name="Hirao M."/>
            <person name="Ohmori Y."/>
            <person name="Kawabata A."/>
            <person name="Hikiji T."/>
            <person name="Kobatake N."/>
            <person name="Inagaki H."/>
            <person name="Ikema Y."/>
            <person name="Okamoto S."/>
            <person name="Okitani R."/>
            <person name="Kawakami T."/>
            <person name="Noguchi S."/>
            <person name="Itoh T."/>
            <person name="Shigeta K."/>
            <person name="Senba T."/>
            <person name="Matsumura K."/>
            <person name="Nakajima Y."/>
            <person name="Mizuno T."/>
            <person name="Morinaga M."/>
            <person name="Sasaki M."/>
            <person name="Togashi T."/>
            <person name="Oyama M."/>
            <person name="Hata H."/>
            <person name="Watanabe M."/>
            <person name="Komatsu T."/>
            <person name="Mizushima-Sugano J."/>
            <person name="Satoh T."/>
            <person name="Shirai Y."/>
            <person name="Takahashi Y."/>
            <person name="Nakagawa K."/>
            <person name="Okumura K."/>
            <person name="Nagase T."/>
            <person name="Nomura N."/>
            <person name="Kikuchi H."/>
            <person name="Masuho Y."/>
            <person name="Yamashita R."/>
            <person name="Nakai K."/>
            <person name="Yada T."/>
            <person name="Nakamura Y."/>
            <person name="Ohara O."/>
            <person name="Isogai T."/>
            <person name="Sugano S."/>
        </authorList>
    </citation>
    <scope>NUCLEOTIDE SEQUENCE [LARGE SCALE MRNA]</scope>
    <source>
        <tissue>Heart</tissue>
    </source>
</reference>
<reference key="4">
    <citation type="journal article" date="2006" name="Nature">
        <title>DNA sequence of human chromosome 17 and analysis of rearrangement in the human lineage.</title>
        <authorList>
            <person name="Zody M.C."/>
            <person name="Garber M."/>
            <person name="Adams D.J."/>
            <person name="Sharpe T."/>
            <person name="Harrow J."/>
            <person name="Lupski J.R."/>
            <person name="Nicholson C."/>
            <person name="Searle S.M."/>
            <person name="Wilming L."/>
            <person name="Young S.K."/>
            <person name="Abouelleil A."/>
            <person name="Allen N.R."/>
            <person name="Bi W."/>
            <person name="Bloom T."/>
            <person name="Borowsky M.L."/>
            <person name="Bugalter B.E."/>
            <person name="Butler J."/>
            <person name="Chang J.L."/>
            <person name="Chen C.-K."/>
            <person name="Cook A."/>
            <person name="Corum B."/>
            <person name="Cuomo C.A."/>
            <person name="de Jong P.J."/>
            <person name="DeCaprio D."/>
            <person name="Dewar K."/>
            <person name="FitzGerald M."/>
            <person name="Gilbert J."/>
            <person name="Gibson R."/>
            <person name="Gnerre S."/>
            <person name="Goldstein S."/>
            <person name="Grafham D.V."/>
            <person name="Grocock R."/>
            <person name="Hafez N."/>
            <person name="Hagopian D.S."/>
            <person name="Hart E."/>
            <person name="Norman C.H."/>
            <person name="Humphray S."/>
            <person name="Jaffe D.B."/>
            <person name="Jones M."/>
            <person name="Kamal M."/>
            <person name="Khodiyar V.K."/>
            <person name="LaButti K."/>
            <person name="Laird G."/>
            <person name="Lehoczky J."/>
            <person name="Liu X."/>
            <person name="Lokyitsang T."/>
            <person name="Loveland J."/>
            <person name="Lui A."/>
            <person name="Macdonald P."/>
            <person name="Major J.E."/>
            <person name="Matthews L."/>
            <person name="Mauceli E."/>
            <person name="McCarroll S.A."/>
            <person name="Mihalev A.H."/>
            <person name="Mudge J."/>
            <person name="Nguyen C."/>
            <person name="Nicol R."/>
            <person name="O'Leary S.B."/>
            <person name="Osoegawa K."/>
            <person name="Schwartz D.C."/>
            <person name="Shaw-Smith C."/>
            <person name="Stankiewicz P."/>
            <person name="Steward C."/>
            <person name="Swarbreck D."/>
            <person name="Venkataraman V."/>
            <person name="Whittaker C.A."/>
            <person name="Yang X."/>
            <person name="Zimmer A.R."/>
            <person name="Bradley A."/>
            <person name="Hubbard T."/>
            <person name="Birren B.W."/>
            <person name="Rogers J."/>
            <person name="Lander E.S."/>
            <person name="Nusbaum C."/>
        </authorList>
    </citation>
    <scope>NUCLEOTIDE SEQUENCE [LARGE SCALE GENOMIC DNA]</scope>
</reference>
<reference key="5">
    <citation type="submission" date="2005-09" db="EMBL/GenBank/DDBJ databases">
        <authorList>
            <person name="Mural R.J."/>
            <person name="Istrail S."/>
            <person name="Sutton G.G."/>
            <person name="Florea L."/>
            <person name="Halpern A.L."/>
            <person name="Mobarry C.M."/>
            <person name="Lippert R."/>
            <person name="Walenz B."/>
            <person name="Shatkay H."/>
            <person name="Dew I."/>
            <person name="Miller J.R."/>
            <person name="Flanigan M.J."/>
            <person name="Edwards N.J."/>
            <person name="Bolanos R."/>
            <person name="Fasulo D."/>
            <person name="Halldorsson B.V."/>
            <person name="Hannenhalli S."/>
            <person name="Turner R."/>
            <person name="Yooseph S."/>
            <person name="Lu F."/>
            <person name="Nusskern D.R."/>
            <person name="Shue B.C."/>
            <person name="Zheng X.H."/>
            <person name="Zhong F."/>
            <person name="Delcher A.L."/>
            <person name="Huson D.H."/>
            <person name="Kravitz S.A."/>
            <person name="Mouchard L."/>
            <person name="Reinert K."/>
            <person name="Remington K.A."/>
            <person name="Clark A.G."/>
            <person name="Waterman M.S."/>
            <person name="Eichler E.E."/>
            <person name="Adams M.D."/>
            <person name="Hunkapiller M.W."/>
            <person name="Myers E.W."/>
            <person name="Venter J.C."/>
        </authorList>
    </citation>
    <scope>NUCLEOTIDE SEQUENCE [LARGE SCALE GENOMIC DNA]</scope>
</reference>
<reference key="6">
    <citation type="journal article" date="2004" name="Genome Res.">
        <title>The status, quality, and expansion of the NIH full-length cDNA project: the Mammalian Gene Collection (MGC).</title>
        <authorList>
            <consortium name="The MGC Project Team"/>
        </authorList>
    </citation>
    <scope>NUCLEOTIDE SEQUENCE [LARGE SCALE MRNA]</scope>
    <source>
        <tissue>Pancreas</tissue>
        <tissue>Spleen</tissue>
    </source>
</reference>
<reference key="7">
    <citation type="journal article" date="1995" name="Hum. Mol. Genet.">
        <title>A common missense mutation in the adhalin gene in three unrelated Brazilian families with a relatively mild form of autosomal recessive limb-girdle muscular dystrophy.</title>
        <authorList>
            <person name="Bueno M.R.P."/>
            <person name="Moreira E.S."/>
            <person name="Vainzof M."/>
            <person name="Chamberlain J."/>
            <person name="Marie S.K."/>
            <person name="Pereira L."/>
            <person name="Akiyama J."/>
            <person name="Roberds S.L."/>
            <person name="Campbell K.P."/>
            <person name="Zatz M."/>
        </authorList>
    </citation>
    <scope>NUCLEOTIDE SEQUENCE [MRNA] OF 1-214</scope>
    <scope>VARIANT LGMDR3 CYS-77</scope>
</reference>
<reference key="8">
    <citation type="journal article" date="1995" name="J. Clin. Invest.">
        <title>Adhalin gene mutations in patients with autosomal recessive childhood onset muscular dystrophy with adhalin deficiency.</title>
        <authorList>
            <person name="Kawai H."/>
            <person name="Akaike M."/>
            <person name="Endo T."/>
            <person name="Adachi K."/>
            <person name="Inui T."/>
            <person name="Mitsui T."/>
            <person name="Kashiwagi S."/>
            <person name="Fujiwara T."/>
            <person name="Okuno S."/>
            <person name="Shin S."/>
            <person name="Miyoshi K."/>
            <person name="Campbell K.P."/>
            <person name="Yamada H."/>
            <person name="Shimizu T."/>
            <person name="Matsumura K."/>
            <person name="Saito S."/>
        </authorList>
    </citation>
    <scope>VARIANTS LGMDR3 CYS-77; PRO-GLY-ALA-GLN-PRO-136 INS; GLY-137 AND PRO-GLY-ALA-GLN-PRO-136 INS</scope>
</reference>
<reference key="9">
    <citation type="journal article" date="1995" name="Nat. Genet.">
        <title>Primary adhalinopathy: a common cause of autosomal recessive muscular dystrophy of variable severity.</title>
        <authorList>
            <person name="Piccolo F."/>
            <person name="Roberds S.L."/>
            <person name="Jeanpierre M."/>
            <person name="Leturcq F."/>
            <person name="Azibi K."/>
            <person name="Beldjord C."/>
            <person name="Carrie A."/>
            <person name="Recan D."/>
            <person name="Chaouch M."/>
            <person name="Reghis A."/>
            <person name="El Kerch F."/>
            <person name="Sefiani A."/>
            <person name="Voit T."/>
            <person name="Merlini L."/>
            <person name="Collin H."/>
            <person name="Eymard B."/>
            <person name="Beckmann J.S."/>
            <person name="Romero N.B."/>
            <person name="Tome F.M.S."/>
            <person name="Fardeau M."/>
            <person name="Campbell K.P."/>
            <person name="Kaplan J.-C."/>
        </authorList>
    </citation>
    <scope>VARIANTS LGMDR3 HIS-34; HIS-62; GLU-68; CYS-77; HIS-98; ALA-242 AND MET-247</scope>
</reference>
<reference key="10">
    <citation type="journal article" date="1995" name="Nat. Genet.">
        <authorList>
            <person name="Piccolo F."/>
            <person name="Roberds S.L."/>
            <person name="Jeanpierre M."/>
            <person name="Leturcq F."/>
            <person name="Azibi K."/>
            <person name="Beldjord C."/>
            <person name="Carrie A."/>
            <person name="Recan D."/>
            <person name="Chaouch M."/>
            <person name="Reghis A."/>
            <person name="El Kerch F."/>
            <person name="Sefiani A."/>
            <person name="Voit T."/>
            <person name="Merlini L."/>
            <person name="Collin H."/>
            <person name="Eymard B."/>
            <person name="Beckmann J.S."/>
            <person name="Romero N.B."/>
            <person name="Tome F.M.S."/>
            <person name="Fardeau M."/>
            <person name="Campbell K.P."/>
            <person name="Kaplan J.-C."/>
        </authorList>
    </citation>
    <scope>ERRATUM OF PUBMED:7663524</scope>
</reference>
<reference key="11">
    <citation type="journal article" date="1997" name="J. Med. Genet.">
        <title>Mutational diversity and hot spots in the alpha-sarcoglycan gene in autosomal recessive muscular dystrophy (LGMD2D).</title>
        <authorList>
            <person name="Carrie A."/>
            <person name="Piccolo F."/>
            <person name="Leturcq F."/>
            <person name="de Toma C."/>
            <person name="Azibi K."/>
            <person name="Beldjord C."/>
            <person name="Vallat J.-M."/>
            <person name="Merlini L."/>
            <person name="Voit T."/>
            <person name="Sewry C."/>
            <person name="Urtizberea J.A."/>
            <person name="Romero N.B."/>
            <person name="Tome F.M.S."/>
            <person name="Fardeau M."/>
            <person name="Sunada Y."/>
            <person name="Campbell K.P."/>
            <person name="Kaplan J.-C."/>
            <person name="Jeanpierre M."/>
        </authorList>
    </citation>
    <scope>VARIANTS LGMDR3 LEU-30; CYS-34; CYS-77; ARG-91; THR-124; LYS-137; PRO-173 AND CYS-284</scope>
</reference>
<reference key="12">
    <citation type="journal article" date="1997" name="N. Engl. J. Med.">
        <title>Mutations in the sarcoglycan genes in patients with myopathy.</title>
        <authorList>
            <person name="Duggan D.J."/>
            <person name="Gorospe J.R."/>
            <person name="Fanin M."/>
            <person name="Hoffman E.P."/>
            <person name="Angelini C."/>
        </authorList>
    </citation>
    <scope>VARIANTS LGMDR3 PRO-31; CYS-77; VAL-93; GLY-97; THR-124; PHE-158; PRO-173; ILE-196; HIS-205 AND GLN-228</scope>
</reference>
<reference key="13">
    <citation type="journal article" date="1998" name="Muscle Nerve">
        <title>Homozygous alpha-sarcoglycan mutation in two siblings: one asymptomatic and one steroid-responsive mild limb-girdle muscular dystrophy patient.</title>
        <authorList>
            <person name="Angelini C."/>
            <person name="Fanin M."/>
            <person name="Menegazzo E."/>
            <person name="Freda M.P."/>
            <person name="Duggan D.J."/>
            <person name="Hoffman E.P."/>
        </authorList>
    </citation>
    <scope>VARIANT LGMDR3 CYS-284</scope>
</reference>
<reference key="14">
    <citation type="journal article" date="2008" name="Neuromuscul. Disord.">
        <title>Sarcoglycanopathies: can muscle immunoanalysis predict the genotype?</title>
        <authorList>
            <person name="Klinge L."/>
            <person name="Dekomien G."/>
            <person name="Aboumousa A."/>
            <person name="Charlton R."/>
            <person name="Epplen J.T."/>
            <person name="Barresi R."/>
            <person name="Bushby K."/>
            <person name="Straub V."/>
        </authorList>
    </citation>
    <scope>VARIANT LGMDR3 PRO-89</scope>
</reference>
<reference key="15">
    <citation type="journal article" date="2018" name="Physiol. Genomics">
        <title>The impact of PYROXD1 deficiency on cellular respiration and correlations with genetic analyses of limb-girdle muscular dystrophy in Saudi Arabia and Sudan.</title>
        <authorList>
            <person name="Saha M."/>
            <person name="Reddy H.M."/>
            <person name="Salih M."/>
            <person name="Estrella E."/>
            <person name="Jones M.D."/>
            <person name="Mitsuhashi S."/>
            <person name="Cho K.A."/>
            <person name="Suzuki-Hatano S."/>
            <person name="Rizzo S.A."/>
            <person name="Hamad M.H."/>
            <person name="Mukhtar M.M."/>
            <person name="Hamed A.A."/>
            <person name="Elseed M.A."/>
            <person name="Lek M."/>
            <person name="Valkanas E."/>
            <person name="MacArthur D.G."/>
            <person name="Kunkel L.M."/>
            <person name="Pacak C.A."/>
            <person name="Draper I."/>
            <person name="Kang P.B."/>
        </authorList>
    </citation>
    <scope>VARIANTS LGMDR3 TRP-74; PHE-76 AND CYS-81</scope>
</reference>
<accession>Q16586</accession>
<accession>A6NEB8</accession>
<accession>A8K3K7</accession>
<accession>Q13710</accession>
<accession>Q13712</accession>
<organism>
    <name type="scientific">Homo sapiens</name>
    <name type="common">Human</name>
    <dbReference type="NCBI Taxonomy" id="9606"/>
    <lineage>
        <taxon>Eukaryota</taxon>
        <taxon>Metazoa</taxon>
        <taxon>Chordata</taxon>
        <taxon>Craniata</taxon>
        <taxon>Vertebrata</taxon>
        <taxon>Euteleostomi</taxon>
        <taxon>Mammalia</taxon>
        <taxon>Eutheria</taxon>
        <taxon>Euarchontoglires</taxon>
        <taxon>Primates</taxon>
        <taxon>Haplorrhini</taxon>
        <taxon>Catarrhini</taxon>
        <taxon>Hominidae</taxon>
        <taxon>Homo</taxon>
    </lineage>
</organism>
<protein>
    <recommendedName>
        <fullName>Alpha-sarcoglycan</fullName>
        <shortName>Alpha-SG</shortName>
    </recommendedName>
    <alternativeName>
        <fullName>50 kDa dystrophin-associated glycoprotein</fullName>
        <shortName>50DAG</shortName>
    </alternativeName>
    <alternativeName>
        <fullName>Adhalin</fullName>
    </alternativeName>
    <alternativeName>
        <fullName>Dystroglycan-2</fullName>
    </alternativeName>
</protein>
<keyword id="KW-0025">Alternative splicing</keyword>
<keyword id="KW-1003">Cell membrane</keyword>
<keyword id="KW-0963">Cytoplasm</keyword>
<keyword id="KW-0206">Cytoskeleton</keyword>
<keyword id="KW-0225">Disease variant</keyword>
<keyword id="KW-0325">Glycoprotein</keyword>
<keyword id="KW-0947">Limb-girdle muscular dystrophy</keyword>
<keyword id="KW-0472">Membrane</keyword>
<keyword id="KW-0597">Phosphoprotein</keyword>
<keyword id="KW-1267">Proteomics identification</keyword>
<keyword id="KW-1185">Reference proteome</keyword>
<keyword id="KW-0732">Signal</keyword>
<keyword id="KW-0812">Transmembrane</keyword>
<keyword id="KW-1133">Transmembrane helix</keyword>
<dbReference type="EMBL" id="U08895">
    <property type="protein sequence ID" value="AAA81637.1"/>
    <property type="molecule type" value="mRNA"/>
</dbReference>
<dbReference type="EMBL" id="L34355">
    <property type="protein sequence ID" value="AAA35510.1"/>
    <property type="molecule type" value="mRNA"/>
</dbReference>
<dbReference type="EMBL" id="L35853">
    <property type="protein sequence ID" value="AAA50461.1"/>
    <property type="molecule type" value="mRNA"/>
</dbReference>
<dbReference type="EMBL" id="AK290622">
    <property type="protein sequence ID" value="BAF83311.1"/>
    <property type="molecule type" value="mRNA"/>
</dbReference>
<dbReference type="EMBL" id="AC015909">
    <property type="status" value="NOT_ANNOTATED_CDS"/>
    <property type="molecule type" value="Genomic_DNA"/>
</dbReference>
<dbReference type="EMBL" id="CH471109">
    <property type="protein sequence ID" value="EAW94635.1"/>
    <property type="molecule type" value="Genomic_DNA"/>
</dbReference>
<dbReference type="EMBL" id="BC025702">
    <property type="protein sequence ID" value="AAH25702.1"/>
    <property type="molecule type" value="mRNA"/>
</dbReference>
<dbReference type="EMBL" id="L46810">
    <property type="protein sequence ID" value="AAC37583.1"/>
    <property type="molecule type" value="mRNA"/>
</dbReference>
<dbReference type="CCDS" id="CCDS32679.1">
    <molecule id="Q16586-1"/>
</dbReference>
<dbReference type="CCDS" id="CCDS45729.1">
    <molecule id="Q16586-2"/>
</dbReference>
<dbReference type="PIR" id="A54746">
    <property type="entry name" value="A54746"/>
</dbReference>
<dbReference type="RefSeq" id="NP_000014.1">
    <molecule id="Q16586-1"/>
    <property type="nucleotide sequence ID" value="NM_000023.4"/>
</dbReference>
<dbReference type="RefSeq" id="NP_001129169.1">
    <molecule id="Q16586-2"/>
    <property type="nucleotide sequence ID" value="NM_001135697.3"/>
</dbReference>
<dbReference type="SMR" id="Q16586"/>
<dbReference type="BioGRID" id="112340">
    <property type="interactions" value="131"/>
</dbReference>
<dbReference type="ComplexPortal" id="CPX-2424">
    <property type="entry name" value="Dystrophin glycoprotein complex, skeletal muscle variant"/>
</dbReference>
<dbReference type="ComplexPortal" id="CPX-2443">
    <property type="entry name" value="Dystrophin glycoprotein complex, neuromuscular junction variant"/>
</dbReference>
<dbReference type="ComplexPortal" id="CPX-2454">
    <property type="entry name" value="Dystrophin glycoprotein complex, retinal outer plexiform layer variant"/>
</dbReference>
<dbReference type="ComplexPortal" id="CPX-2455">
    <property type="entry name" value="Dystrophin glycoprotein complex, retinal inner limiting membrane variant"/>
</dbReference>
<dbReference type="CORUM" id="Q16586"/>
<dbReference type="FunCoup" id="Q16586">
    <property type="interactions" value="20"/>
</dbReference>
<dbReference type="IntAct" id="Q16586">
    <property type="interactions" value="103"/>
</dbReference>
<dbReference type="MINT" id="Q16586"/>
<dbReference type="STRING" id="9606.ENSP00000262018"/>
<dbReference type="GlyCosmos" id="Q16586">
    <property type="glycosylation" value="2 sites, No reported glycans"/>
</dbReference>
<dbReference type="GlyGen" id="Q16586">
    <property type="glycosylation" value="3 sites"/>
</dbReference>
<dbReference type="PhosphoSitePlus" id="Q16586"/>
<dbReference type="SwissPalm" id="Q16586"/>
<dbReference type="BioMuta" id="SGCA"/>
<dbReference type="MassIVE" id="Q16586"/>
<dbReference type="PaxDb" id="9606-ENSP00000262018"/>
<dbReference type="PeptideAtlas" id="Q16586"/>
<dbReference type="ProteomicsDB" id="60931">
    <molecule id="Q16586-1"/>
</dbReference>
<dbReference type="ProteomicsDB" id="60932">
    <molecule id="Q16586-2"/>
</dbReference>
<dbReference type="Antibodypedia" id="2323">
    <property type="antibodies" value="215 antibodies from 32 providers"/>
</dbReference>
<dbReference type="DNASU" id="6442"/>
<dbReference type="Ensembl" id="ENST00000262018.8">
    <molecule id="Q16586-1"/>
    <property type="protein sequence ID" value="ENSP00000262018.3"/>
    <property type="gene ID" value="ENSG00000108823.17"/>
</dbReference>
<dbReference type="Ensembl" id="ENST00000344627.10">
    <molecule id="Q16586-2"/>
    <property type="protein sequence ID" value="ENSP00000345522.6"/>
    <property type="gene ID" value="ENSG00000108823.17"/>
</dbReference>
<dbReference type="GeneID" id="6442"/>
<dbReference type="KEGG" id="hsa:6442"/>
<dbReference type="MANE-Select" id="ENST00000262018.8">
    <property type="protein sequence ID" value="ENSP00000262018.3"/>
    <property type="RefSeq nucleotide sequence ID" value="NM_000023.4"/>
    <property type="RefSeq protein sequence ID" value="NP_000014.1"/>
</dbReference>
<dbReference type="UCSC" id="uc002iqi.4">
    <molecule id="Q16586-1"/>
    <property type="organism name" value="human"/>
</dbReference>
<dbReference type="AGR" id="HGNC:10805"/>
<dbReference type="CTD" id="6442"/>
<dbReference type="DisGeNET" id="6442"/>
<dbReference type="GeneCards" id="SGCA"/>
<dbReference type="HGNC" id="HGNC:10805">
    <property type="gene designation" value="SGCA"/>
</dbReference>
<dbReference type="HPA" id="ENSG00000108823">
    <property type="expression patterns" value="Group enriched (heart muscle, skeletal muscle, tongue)"/>
</dbReference>
<dbReference type="MalaCards" id="SGCA"/>
<dbReference type="MIM" id="600119">
    <property type="type" value="gene"/>
</dbReference>
<dbReference type="MIM" id="608099">
    <property type="type" value="phenotype"/>
</dbReference>
<dbReference type="neXtProt" id="NX_Q16586"/>
<dbReference type="OpenTargets" id="ENSG00000108823"/>
<dbReference type="Orphanet" id="62">
    <property type="disease" value="Alpha-sarcoglycan-related limb-girdle muscular dystrophy R3"/>
</dbReference>
<dbReference type="PharmGKB" id="PA35716"/>
<dbReference type="VEuPathDB" id="HostDB:ENSG00000108823"/>
<dbReference type="eggNOG" id="KOG4482">
    <property type="taxonomic scope" value="Eukaryota"/>
</dbReference>
<dbReference type="GeneTree" id="ENSGT00390000005672"/>
<dbReference type="HOGENOM" id="CLU_053258_0_0_1"/>
<dbReference type="InParanoid" id="Q16586"/>
<dbReference type="OMA" id="VGSEQYF"/>
<dbReference type="OrthoDB" id="10019906at2759"/>
<dbReference type="PAN-GO" id="Q16586">
    <property type="GO annotations" value="1 GO annotation based on evolutionary models"/>
</dbReference>
<dbReference type="PhylomeDB" id="Q16586"/>
<dbReference type="TreeFam" id="TF314655"/>
<dbReference type="PathwayCommons" id="Q16586"/>
<dbReference type="Reactome" id="R-HSA-9913351">
    <property type="pathway name" value="Formation of the dystrophin-glycoprotein complex (DGC)"/>
</dbReference>
<dbReference type="SignaLink" id="Q16586"/>
<dbReference type="SIGNOR" id="Q16586"/>
<dbReference type="BioGRID-ORCS" id="6442">
    <property type="hits" value="23 hits in 1146 CRISPR screens"/>
</dbReference>
<dbReference type="ChiTaRS" id="SGCA">
    <property type="organism name" value="human"/>
</dbReference>
<dbReference type="GeneWiki" id="SGCA"/>
<dbReference type="GenomeRNAi" id="6442"/>
<dbReference type="Pharos" id="Q16586">
    <property type="development level" value="Tbio"/>
</dbReference>
<dbReference type="PRO" id="PR:Q16586"/>
<dbReference type="Proteomes" id="UP000005640">
    <property type="component" value="Chromosome 17"/>
</dbReference>
<dbReference type="RNAct" id="Q16586">
    <property type="molecule type" value="protein"/>
</dbReference>
<dbReference type="Bgee" id="ENSG00000108823">
    <property type="expression patterns" value="Expressed in hindlimb stylopod muscle and 120 other cell types or tissues"/>
</dbReference>
<dbReference type="ExpressionAtlas" id="Q16586">
    <property type="expression patterns" value="baseline and differential"/>
</dbReference>
<dbReference type="GO" id="GO:0005911">
    <property type="term" value="C:cell-cell junction"/>
    <property type="evidence" value="ECO:0007669"/>
    <property type="project" value="Ensembl"/>
</dbReference>
<dbReference type="GO" id="GO:0005856">
    <property type="term" value="C:cytoskeleton"/>
    <property type="evidence" value="ECO:0007669"/>
    <property type="project" value="UniProtKB-SubCell"/>
</dbReference>
<dbReference type="GO" id="GO:0016010">
    <property type="term" value="C:dystrophin-associated glycoprotein complex"/>
    <property type="evidence" value="ECO:0000304"/>
    <property type="project" value="ProtInc"/>
</dbReference>
<dbReference type="GO" id="GO:0005789">
    <property type="term" value="C:endoplasmic reticulum membrane"/>
    <property type="evidence" value="ECO:0000304"/>
    <property type="project" value="Reactome"/>
</dbReference>
<dbReference type="GO" id="GO:0000139">
    <property type="term" value="C:Golgi membrane"/>
    <property type="evidence" value="ECO:0000304"/>
    <property type="project" value="Reactome"/>
</dbReference>
<dbReference type="GO" id="GO:0045121">
    <property type="term" value="C:membrane raft"/>
    <property type="evidence" value="ECO:0007669"/>
    <property type="project" value="Ensembl"/>
</dbReference>
<dbReference type="GO" id="GO:0005886">
    <property type="term" value="C:plasma membrane"/>
    <property type="evidence" value="ECO:0000304"/>
    <property type="project" value="Reactome"/>
</dbReference>
<dbReference type="GO" id="GO:0016012">
    <property type="term" value="C:sarcoglycan complex"/>
    <property type="evidence" value="ECO:0000318"/>
    <property type="project" value="GO_Central"/>
</dbReference>
<dbReference type="GO" id="GO:0042383">
    <property type="term" value="C:sarcolemma"/>
    <property type="evidence" value="ECO:0007669"/>
    <property type="project" value="UniProtKB-SubCell"/>
</dbReference>
<dbReference type="GO" id="GO:0005509">
    <property type="term" value="F:calcium ion binding"/>
    <property type="evidence" value="ECO:0007669"/>
    <property type="project" value="InterPro"/>
</dbReference>
<dbReference type="GO" id="GO:0006936">
    <property type="term" value="P:muscle contraction"/>
    <property type="evidence" value="ECO:0000304"/>
    <property type="project" value="ProtInc"/>
</dbReference>
<dbReference type="GO" id="GO:0007517">
    <property type="term" value="P:muscle organ development"/>
    <property type="evidence" value="ECO:0000304"/>
    <property type="project" value="ProtInc"/>
</dbReference>
<dbReference type="InterPro" id="IPR006644">
    <property type="entry name" value="Cadg"/>
</dbReference>
<dbReference type="InterPro" id="IPR015919">
    <property type="entry name" value="Cadherin-like_sf"/>
</dbReference>
<dbReference type="InterPro" id="IPR008908">
    <property type="entry name" value="Sarcoglycan_alpha/epsilon"/>
</dbReference>
<dbReference type="InterPro" id="IPR048347">
    <property type="entry name" value="Sarcoglycan_C"/>
</dbReference>
<dbReference type="InterPro" id="IPR048346">
    <property type="entry name" value="Sarcoglycan_N"/>
</dbReference>
<dbReference type="PANTHER" id="PTHR10132">
    <property type="entry name" value="ALPHA-/EPSILON-SARCOGLYCAN FAMILY MEMBER"/>
    <property type="match status" value="1"/>
</dbReference>
<dbReference type="PANTHER" id="PTHR10132:SF16">
    <property type="entry name" value="ALPHA-SARCOGLYCAN"/>
    <property type="match status" value="1"/>
</dbReference>
<dbReference type="Pfam" id="PF05510">
    <property type="entry name" value="Sarcoglycan_2"/>
    <property type="match status" value="1"/>
</dbReference>
<dbReference type="Pfam" id="PF20989">
    <property type="entry name" value="Sarcoglycan_2_C"/>
    <property type="match status" value="1"/>
</dbReference>
<dbReference type="SMART" id="SM00736">
    <property type="entry name" value="CADG"/>
    <property type="match status" value="1"/>
</dbReference>
<dbReference type="SUPFAM" id="SSF49313">
    <property type="entry name" value="Cadherin-like"/>
    <property type="match status" value="1"/>
</dbReference>
<comment type="function">
    <text>Component of the sarcoglycan complex, a subcomplex of the dystrophin-glycoprotein complex which forms a link between the F-actin cytoskeleton and the extracellular matrix.</text>
</comment>
<comment type="subunit">
    <text evidence="1">Interacts with the syntrophin SNTA1. Cross-link to form 2 major subcomplexes: one consisting of SGCB, SGCD and SGCG and the other consisting of SGCB and SGCD. The association between SGCB and SGCG is particularly strong while SGCA is loosely associated with the other sarcoglycans (By similarity).</text>
</comment>
<comment type="interaction">
    <interactant intactId="EBI-5663553">
        <id>Q16586</id>
    </interactant>
    <interactant intactId="EBI-746453">
        <id>P54725</id>
        <label>RAD23A</label>
    </interactant>
    <organismsDiffer>false</organismsDiffer>
    <experiments>3</experiments>
</comment>
<comment type="interaction">
    <interactant intactId="EBI-5663553">
        <id>Q16586</id>
    </interactant>
    <interactant intactId="EBI-350723">
        <id>P50454</id>
        <label>SERPINH1</label>
    </interactant>
    <organismsDiffer>false</organismsDiffer>
    <experiments>3</experiments>
</comment>
<comment type="interaction">
    <interactant intactId="EBI-5663553">
        <id>Q16586</id>
    </interactant>
    <interactant intactId="EBI-347996">
        <id>O43765</id>
        <label>SGTA</label>
    </interactant>
    <organismsDiffer>false</organismsDiffer>
    <experiments>13</experiments>
</comment>
<comment type="interaction">
    <interactant intactId="EBI-5663553">
        <id>Q16586</id>
    </interactant>
    <interactant intactId="EBI-744081">
        <id>Q96EQ0</id>
        <label>SGTB</label>
    </interactant>
    <organismsDiffer>false</organismsDiffer>
    <experiments>3</experiments>
</comment>
<comment type="interaction">
    <interactant intactId="EBI-5663553">
        <id>Q16586</id>
    </interactant>
    <interactant intactId="EBI-296151">
        <id>P37173</id>
        <label>TGFBR2</label>
    </interactant>
    <organismsDiffer>false</organismsDiffer>
    <experiments>3</experiments>
</comment>
<comment type="interaction">
    <interactant intactId="EBI-16434133">
        <id>Q16586-2</id>
    </interactant>
    <interactant intactId="EBI-347996">
        <id>O43765</id>
        <label>SGTA</label>
    </interactant>
    <organismsDiffer>false</organismsDiffer>
    <experiments>4</experiments>
</comment>
<comment type="subcellular location">
    <subcellularLocation>
        <location evidence="1">Cell membrane</location>
        <location evidence="1">Sarcolemma</location>
        <topology evidence="1">Single-pass type I membrane protein</topology>
    </subcellularLocation>
    <subcellularLocation>
        <location evidence="1">Cytoplasm</location>
        <location evidence="1">Cytoskeleton</location>
    </subcellularLocation>
</comment>
<comment type="alternative products">
    <event type="alternative splicing"/>
    <isoform>
        <id>Q16586-1</id>
        <name>SGCA-1</name>
        <sequence type="displayed"/>
    </isoform>
    <isoform>
        <id>Q16586-2</id>
        <name>SGCA-2</name>
        <sequence type="described" ref="VSP_006017"/>
    </isoform>
</comment>
<comment type="tissue specificity">
    <text>Most strongly expressed in skeletal muscle. Also expressed in cardiac muscle and, at much lower levels, in lung. In the fetus, most abundant in cardiac muscle and, at lower levels, in lung. Also detected in liver and kidney. Not expressed in brain.</text>
</comment>
<comment type="disease" evidence="4 5 6 7 8 9 10 11 12">
    <disease id="DI-00661">
        <name>Muscular dystrophy, limb-girdle, autosomal recessive 3</name>
        <acronym>LGMDR3</acronym>
        <description>An autosomal recessive degenerative myopathy characterized by progressive muscle wasting from early childhood with loss of independent ambulation by teenage years. Muscle biopsy shows necrosis, decreased immunostaining for alpha sarcoglycan, and adhalin deficiency.</description>
        <dbReference type="MIM" id="608099"/>
    </disease>
    <text>The disease is caused by variants affecting the gene represented in this entry.</text>
</comment>
<comment type="similarity">
    <text evidence="13">Belongs to the sarcoglycan alpha/epsilon family.</text>
</comment>
<comment type="online information" name="Leiden Muscular Dystrophy pages">
    <link uri="https://www.dmd.nl/sgca_home.html"/>
    <text>SGCA mutations in LGMD2D</text>
</comment>
<evidence type="ECO:0000250" key="1"/>
<evidence type="ECO:0000250" key="2">
    <source>
        <dbReference type="UniProtKB" id="P82350"/>
    </source>
</evidence>
<evidence type="ECO:0000255" key="3"/>
<evidence type="ECO:0000269" key="4">
    <source>
    </source>
</evidence>
<evidence type="ECO:0000269" key="5">
    <source>
    </source>
</evidence>
<evidence type="ECO:0000269" key="6">
    <source>
    </source>
</evidence>
<evidence type="ECO:0000269" key="7">
    <source>
    </source>
</evidence>
<evidence type="ECO:0000269" key="8">
    <source>
    </source>
</evidence>
<evidence type="ECO:0000269" key="9">
    <source>
    </source>
</evidence>
<evidence type="ECO:0000269" key="10">
    <source>
    </source>
</evidence>
<evidence type="ECO:0000269" key="11">
    <source>
    </source>
</evidence>
<evidence type="ECO:0000269" key="12">
    <source>
    </source>
</evidence>
<evidence type="ECO:0000305" key="13"/>